<name>SPEE_YERPP</name>
<feature type="chain" id="PRO_1000012036" description="Polyamine aminopropyltransferase">
    <location>
        <begin position="1"/>
        <end position="296"/>
    </location>
</feature>
<feature type="domain" description="PABS" evidence="1">
    <location>
        <begin position="5"/>
        <end position="238"/>
    </location>
</feature>
<feature type="active site" description="Proton acceptor" evidence="1">
    <location>
        <position position="158"/>
    </location>
</feature>
<feature type="binding site" evidence="1">
    <location>
        <position position="33"/>
    </location>
    <ligand>
        <name>S-methyl-5'-thioadenosine</name>
        <dbReference type="ChEBI" id="CHEBI:17509"/>
    </ligand>
</feature>
<feature type="binding site" evidence="1">
    <location>
        <position position="64"/>
    </location>
    <ligand>
        <name>spermidine</name>
        <dbReference type="ChEBI" id="CHEBI:57834"/>
    </ligand>
</feature>
<feature type="binding site" evidence="1">
    <location>
        <position position="88"/>
    </location>
    <ligand>
        <name>spermidine</name>
        <dbReference type="ChEBI" id="CHEBI:57834"/>
    </ligand>
</feature>
<feature type="binding site" evidence="1">
    <location>
        <position position="108"/>
    </location>
    <ligand>
        <name>S-methyl-5'-thioadenosine</name>
        <dbReference type="ChEBI" id="CHEBI:17509"/>
    </ligand>
</feature>
<feature type="binding site" evidence="1">
    <location>
        <begin position="140"/>
        <end position="141"/>
    </location>
    <ligand>
        <name>S-methyl-5'-thioadenosine</name>
        <dbReference type="ChEBI" id="CHEBI:17509"/>
    </ligand>
</feature>
<feature type="binding site" evidence="1">
    <location>
        <begin position="158"/>
        <end position="161"/>
    </location>
    <ligand>
        <name>spermidine</name>
        <dbReference type="ChEBI" id="CHEBI:57834"/>
    </ligand>
</feature>
<feature type="binding site" evidence="1">
    <location>
        <position position="165"/>
    </location>
    <ligand>
        <name>S-methyl-5'-thioadenosine</name>
        <dbReference type="ChEBI" id="CHEBI:17509"/>
    </ligand>
</feature>
<keyword id="KW-0963">Cytoplasm</keyword>
<keyword id="KW-0620">Polyamine biosynthesis</keyword>
<keyword id="KW-0745">Spermidine biosynthesis</keyword>
<keyword id="KW-0808">Transferase</keyword>
<evidence type="ECO:0000255" key="1">
    <source>
        <dbReference type="HAMAP-Rule" id="MF_00198"/>
    </source>
</evidence>
<accession>A4TPU4</accession>
<organism>
    <name type="scientific">Yersinia pestis (strain Pestoides F)</name>
    <dbReference type="NCBI Taxonomy" id="386656"/>
    <lineage>
        <taxon>Bacteria</taxon>
        <taxon>Pseudomonadati</taxon>
        <taxon>Pseudomonadota</taxon>
        <taxon>Gammaproteobacteria</taxon>
        <taxon>Enterobacterales</taxon>
        <taxon>Yersiniaceae</taxon>
        <taxon>Yersinia</taxon>
    </lineage>
</organism>
<gene>
    <name evidence="1" type="primary">speE</name>
    <name type="ordered locus">YPDSF_2944</name>
</gene>
<reference key="1">
    <citation type="submission" date="2007-02" db="EMBL/GenBank/DDBJ databases">
        <title>Complete sequence of chromosome of Yersinia pestis Pestoides F.</title>
        <authorList>
            <consortium name="US DOE Joint Genome Institute"/>
            <person name="Copeland A."/>
            <person name="Lucas S."/>
            <person name="Lapidus A."/>
            <person name="Barry K."/>
            <person name="Detter J.C."/>
            <person name="Glavina del Rio T."/>
            <person name="Hammon N."/>
            <person name="Israni S."/>
            <person name="Dalin E."/>
            <person name="Tice H."/>
            <person name="Pitluck S."/>
            <person name="Di Bartolo G."/>
            <person name="Chain P."/>
            <person name="Malfatti S."/>
            <person name="Shin M."/>
            <person name="Vergez L."/>
            <person name="Schmutz J."/>
            <person name="Larimer F."/>
            <person name="Land M."/>
            <person name="Hauser L."/>
            <person name="Worsham P."/>
            <person name="Chu M."/>
            <person name="Bearden S."/>
            <person name="Garcia E."/>
            <person name="Richardson P."/>
        </authorList>
    </citation>
    <scope>NUCLEOTIDE SEQUENCE [LARGE SCALE GENOMIC DNA]</scope>
    <source>
        <strain>Pestoides F</strain>
    </source>
</reference>
<protein>
    <recommendedName>
        <fullName evidence="1">Polyamine aminopropyltransferase</fullName>
    </recommendedName>
    <alternativeName>
        <fullName evidence="1">Putrescine aminopropyltransferase</fullName>
        <shortName evidence="1">PAPT</shortName>
    </alternativeName>
    <alternativeName>
        <fullName evidence="1">Spermidine synthase</fullName>
        <shortName evidence="1">SPDS</shortName>
        <shortName evidence="1">SPDSY</shortName>
        <ecNumber evidence="1">2.5.1.16</ecNumber>
    </alternativeName>
</protein>
<dbReference type="EC" id="2.5.1.16" evidence="1"/>
<dbReference type="EMBL" id="CP000668">
    <property type="protein sequence ID" value="ABP41306.1"/>
    <property type="molecule type" value="Genomic_DNA"/>
</dbReference>
<dbReference type="RefSeq" id="WP_002209338.1">
    <property type="nucleotide sequence ID" value="NZ_CP009715.1"/>
</dbReference>
<dbReference type="SMR" id="A4TPU4"/>
<dbReference type="GeneID" id="57975298"/>
<dbReference type="KEGG" id="ypp:YPDSF_2944"/>
<dbReference type="PATRIC" id="fig|386656.14.peg.1422"/>
<dbReference type="UniPathway" id="UPA00248">
    <property type="reaction ID" value="UER00314"/>
</dbReference>
<dbReference type="GO" id="GO:0005829">
    <property type="term" value="C:cytosol"/>
    <property type="evidence" value="ECO:0007669"/>
    <property type="project" value="TreeGrafter"/>
</dbReference>
<dbReference type="GO" id="GO:0004766">
    <property type="term" value="F:spermidine synthase activity"/>
    <property type="evidence" value="ECO:0007669"/>
    <property type="project" value="UniProtKB-UniRule"/>
</dbReference>
<dbReference type="GO" id="GO:0008295">
    <property type="term" value="P:spermidine biosynthetic process"/>
    <property type="evidence" value="ECO:0007669"/>
    <property type="project" value="UniProtKB-UniRule"/>
</dbReference>
<dbReference type="CDD" id="cd02440">
    <property type="entry name" value="AdoMet_MTases"/>
    <property type="match status" value="1"/>
</dbReference>
<dbReference type="FunFam" id="2.30.140.10:FF:000002">
    <property type="entry name" value="Polyamine aminopropyltransferase"/>
    <property type="match status" value="1"/>
</dbReference>
<dbReference type="FunFam" id="3.40.50.150:FF:000026">
    <property type="entry name" value="Polyamine aminopropyltransferase"/>
    <property type="match status" value="1"/>
</dbReference>
<dbReference type="Gene3D" id="2.30.140.10">
    <property type="entry name" value="Spermidine synthase, tetramerisation domain"/>
    <property type="match status" value="1"/>
</dbReference>
<dbReference type="Gene3D" id="3.40.50.150">
    <property type="entry name" value="Vaccinia Virus protein VP39"/>
    <property type="match status" value="1"/>
</dbReference>
<dbReference type="HAMAP" id="MF_00198">
    <property type="entry name" value="Spermidine_synth"/>
    <property type="match status" value="1"/>
</dbReference>
<dbReference type="InterPro" id="IPR030374">
    <property type="entry name" value="PABS"/>
</dbReference>
<dbReference type="InterPro" id="IPR030373">
    <property type="entry name" value="PABS_CS"/>
</dbReference>
<dbReference type="InterPro" id="IPR029063">
    <property type="entry name" value="SAM-dependent_MTases_sf"/>
</dbReference>
<dbReference type="InterPro" id="IPR001045">
    <property type="entry name" value="Spermi_synthase"/>
</dbReference>
<dbReference type="InterPro" id="IPR035246">
    <property type="entry name" value="Spermidine_synt_N"/>
</dbReference>
<dbReference type="InterPro" id="IPR037163">
    <property type="entry name" value="Spermidine_synt_N_sf"/>
</dbReference>
<dbReference type="NCBIfam" id="NF037959">
    <property type="entry name" value="MFS_SpdSyn"/>
    <property type="match status" value="1"/>
</dbReference>
<dbReference type="NCBIfam" id="NF002010">
    <property type="entry name" value="PRK00811.1"/>
    <property type="match status" value="1"/>
</dbReference>
<dbReference type="NCBIfam" id="TIGR00417">
    <property type="entry name" value="speE"/>
    <property type="match status" value="1"/>
</dbReference>
<dbReference type="PANTHER" id="PTHR11558:SF11">
    <property type="entry name" value="SPERMIDINE SYNTHASE"/>
    <property type="match status" value="1"/>
</dbReference>
<dbReference type="PANTHER" id="PTHR11558">
    <property type="entry name" value="SPERMIDINE/SPERMINE SYNTHASE"/>
    <property type="match status" value="1"/>
</dbReference>
<dbReference type="Pfam" id="PF17284">
    <property type="entry name" value="Spermine_synt_N"/>
    <property type="match status" value="1"/>
</dbReference>
<dbReference type="Pfam" id="PF01564">
    <property type="entry name" value="Spermine_synth"/>
    <property type="match status" value="1"/>
</dbReference>
<dbReference type="SUPFAM" id="SSF53335">
    <property type="entry name" value="S-adenosyl-L-methionine-dependent methyltransferases"/>
    <property type="match status" value="1"/>
</dbReference>
<dbReference type="PROSITE" id="PS01330">
    <property type="entry name" value="PABS_1"/>
    <property type="match status" value="1"/>
</dbReference>
<dbReference type="PROSITE" id="PS51006">
    <property type="entry name" value="PABS_2"/>
    <property type="match status" value="1"/>
</dbReference>
<proteinExistence type="inferred from homology"/>
<sequence>MSQKELWYETLHANFGQYFSVENVLFREKTEHQDLVIFENPELGRVMALDGVVQTTERDEFIYHEMMTHVPLLAHGQAKKVLIIGGGDGAMLREVSRHKNIEQITMVEIDAGVVEFCRQYLPNHSAGAYDDPRFKLVIDDGVNFVNQTTEKFDVIISDCTDPIGPGESLFTSVFYEGCARSLNEGGIFVAQNGVCFLQQDEAVNSHNKLSHYFSDVSFYQAAIPTYYGGIMTFAWATQNPALRQLDLATLQNRFAQAGLACRYYNPAIHVGSFALPQYLLDALTTIPKVIGVDSSE</sequence>
<comment type="function">
    <text evidence="1">Catalyzes the irreversible transfer of a propylamine group from the amino donor S-adenosylmethioninamine (decarboxy-AdoMet) to putrescine (1,4-diaminobutane) to yield spermidine.</text>
</comment>
<comment type="catalytic activity">
    <reaction evidence="1">
        <text>S-adenosyl 3-(methylsulfanyl)propylamine + putrescine = S-methyl-5'-thioadenosine + spermidine + H(+)</text>
        <dbReference type="Rhea" id="RHEA:12721"/>
        <dbReference type="ChEBI" id="CHEBI:15378"/>
        <dbReference type="ChEBI" id="CHEBI:17509"/>
        <dbReference type="ChEBI" id="CHEBI:57443"/>
        <dbReference type="ChEBI" id="CHEBI:57834"/>
        <dbReference type="ChEBI" id="CHEBI:326268"/>
        <dbReference type="EC" id="2.5.1.16"/>
    </reaction>
</comment>
<comment type="pathway">
    <text evidence="1">Amine and polyamine biosynthesis; spermidine biosynthesis; spermidine from putrescine: step 1/1.</text>
</comment>
<comment type="subunit">
    <text evidence="1">Homodimer or homotetramer.</text>
</comment>
<comment type="subcellular location">
    <subcellularLocation>
        <location evidence="1">Cytoplasm</location>
    </subcellularLocation>
</comment>
<comment type="similarity">
    <text evidence="1">Belongs to the spermidine/spermine synthase family.</text>
</comment>